<proteinExistence type="evidence at transcript level"/>
<gene>
    <name evidence="1" type="primary">petL</name>
</gene>
<accession>Q5K3V1</accession>
<sequence length="31" mass="3507">MSTIISYFGFLLASIIFTLILFISLSKIQLI</sequence>
<geneLocation type="chloroplast"/>
<evidence type="ECO:0000255" key="1">
    <source>
        <dbReference type="HAMAP-Rule" id="MF_00433"/>
    </source>
</evidence>
<evidence type="ECO:0000269" key="2">
    <source>
    </source>
</evidence>
<reference key="1">
    <citation type="journal article" date="2004" name="Nucleic Acids Res.">
        <title>Rapid evolution of RNA editing sites in a small non-essential plastid gene.</title>
        <authorList>
            <person name="Fiebig A."/>
            <person name="Stegemann S."/>
            <person name="Bock R."/>
        </authorList>
    </citation>
    <scope>NUCLEOTIDE SEQUENCE [GENOMIC DNA]</scope>
    <scope>RNA EDITING</scope>
    <source>
        <tissue>Leaf</tissue>
    </source>
</reference>
<organism>
    <name type="scientific">Abies homolepis</name>
    <name type="common">Nikko fir</name>
    <dbReference type="NCBI Taxonomy" id="78261"/>
    <lineage>
        <taxon>Eukaryota</taxon>
        <taxon>Viridiplantae</taxon>
        <taxon>Streptophyta</taxon>
        <taxon>Embryophyta</taxon>
        <taxon>Tracheophyta</taxon>
        <taxon>Spermatophyta</taxon>
        <taxon>Pinopsida</taxon>
        <taxon>Pinidae</taxon>
        <taxon>Conifers I</taxon>
        <taxon>Pinales</taxon>
        <taxon>Pinaceae</taxon>
        <taxon>Abies</taxon>
    </lineage>
</organism>
<dbReference type="EMBL" id="AJ704413">
    <property type="protein sequence ID" value="CAG28625.1"/>
    <property type="molecule type" value="Genomic_DNA"/>
</dbReference>
<dbReference type="SMR" id="Q5K3V1"/>
<dbReference type="GO" id="GO:0009535">
    <property type="term" value="C:chloroplast thylakoid membrane"/>
    <property type="evidence" value="ECO:0007669"/>
    <property type="project" value="UniProtKB-SubCell"/>
</dbReference>
<dbReference type="GO" id="GO:0009512">
    <property type="term" value="C:cytochrome b6f complex"/>
    <property type="evidence" value="ECO:0007669"/>
    <property type="project" value="InterPro"/>
</dbReference>
<dbReference type="GO" id="GO:0045158">
    <property type="term" value="F:electron transporter, transferring electrons within cytochrome b6/f complex of photosystem II activity"/>
    <property type="evidence" value="ECO:0007669"/>
    <property type="project" value="UniProtKB-UniRule"/>
</dbReference>
<dbReference type="GO" id="GO:0015979">
    <property type="term" value="P:photosynthesis"/>
    <property type="evidence" value="ECO:0007669"/>
    <property type="project" value="UniProtKB-KW"/>
</dbReference>
<dbReference type="HAMAP" id="MF_00433">
    <property type="entry name" value="Cytb6_f_PetL"/>
    <property type="match status" value="1"/>
</dbReference>
<dbReference type="InterPro" id="IPR007802">
    <property type="entry name" value="Cyt_b6/f_cplx_su6"/>
</dbReference>
<dbReference type="PANTHER" id="PTHR37266">
    <property type="entry name" value="CYTOCHROME B6-F COMPLEX SUBUNIT 6"/>
    <property type="match status" value="1"/>
</dbReference>
<dbReference type="PANTHER" id="PTHR37266:SF1">
    <property type="entry name" value="CYTOCHROME B6-F COMPLEX SUBUNIT 6"/>
    <property type="match status" value="1"/>
</dbReference>
<dbReference type="Pfam" id="PF05115">
    <property type="entry name" value="PetL"/>
    <property type="match status" value="1"/>
</dbReference>
<protein>
    <recommendedName>
        <fullName evidence="1">Cytochrome b6-f complex subunit 6</fullName>
    </recommendedName>
    <alternativeName>
        <fullName evidence="1">Cytochrome b6-f complex subunit PetL</fullName>
    </alternativeName>
    <alternativeName>
        <fullName evidence="1">Cytochrome b6-f complex subunit VI</fullName>
    </alternativeName>
</protein>
<comment type="function">
    <text evidence="1">Component of the cytochrome b6-f complex, which mediates electron transfer between photosystem II (PSII) and photosystem I (PSI), cyclic electron flow around PSI, and state transitions. PetL is important for photoautotrophic growth as well as for electron transfer efficiency and stability of the cytochrome b6-f complex.</text>
</comment>
<comment type="subunit">
    <text evidence="1">The 4 large subunits of the cytochrome b6-f complex are cytochrome b6, subunit IV (17 kDa polypeptide, PetD), cytochrome f and the Rieske protein, while the 4 small subunits are PetG, PetL, PetM and PetN. The complex functions as a dimer.</text>
</comment>
<comment type="subcellular location">
    <subcellularLocation>
        <location evidence="1">Plastid</location>
        <location evidence="1">Chloroplast thylakoid membrane</location>
        <topology evidence="1">Single-pass membrane protein</topology>
    </subcellularLocation>
</comment>
<comment type="RNA editing">
    <location>
        <position position="1" evidence="2"/>
    </location>
    <location>
        <position position="25" evidence="2"/>
    </location>
    <text>The initiator methionine is created by RNA editing.</text>
</comment>
<comment type="similarity">
    <text evidence="1">Belongs to the PetL family.</text>
</comment>
<name>PETL_ABIHO</name>
<feature type="chain" id="PRO_0000233668" description="Cytochrome b6-f complex subunit 6">
    <location>
        <begin position="1"/>
        <end position="31"/>
    </location>
</feature>
<feature type="transmembrane region" description="Helical" evidence="1">
    <location>
        <begin position="3"/>
        <end position="23"/>
    </location>
</feature>
<keyword id="KW-0150">Chloroplast</keyword>
<keyword id="KW-0249">Electron transport</keyword>
<keyword id="KW-0472">Membrane</keyword>
<keyword id="KW-0602">Photosynthesis</keyword>
<keyword id="KW-0934">Plastid</keyword>
<keyword id="KW-0691">RNA editing</keyword>
<keyword id="KW-0793">Thylakoid</keyword>
<keyword id="KW-0812">Transmembrane</keyword>
<keyword id="KW-1133">Transmembrane helix</keyword>
<keyword id="KW-0813">Transport</keyword>